<evidence type="ECO:0000255" key="1">
    <source>
        <dbReference type="HAMAP-Rule" id="MF_02003"/>
    </source>
</evidence>
<evidence type="ECO:0000305" key="2"/>
<organism>
    <name type="scientific">Pyrococcus furiosus (strain ATCC 43587 / DSM 3638 / JCM 8422 / Vc1)</name>
    <dbReference type="NCBI Taxonomy" id="186497"/>
    <lineage>
        <taxon>Archaea</taxon>
        <taxon>Methanobacteriati</taxon>
        <taxon>Methanobacteriota</taxon>
        <taxon>Thermococci</taxon>
        <taxon>Thermococcales</taxon>
        <taxon>Thermococcaceae</taxon>
        <taxon>Pyrococcus</taxon>
    </lineage>
</organism>
<proteinExistence type="inferred from homology"/>
<feature type="chain" id="PRO_0000098589" description="Isoleucine--tRNA ligase">
    <location>
        <begin position="1"/>
        <end position="1066"/>
    </location>
</feature>
<feature type="short sequence motif" description="'HIGH' region">
    <location>
        <begin position="49"/>
        <end position="59"/>
    </location>
</feature>
<feature type="short sequence motif" description="'KMSKS' region">
    <location>
        <begin position="625"/>
        <end position="629"/>
    </location>
</feature>
<feature type="binding site" evidence="1">
    <location>
        <position position="628"/>
    </location>
    <ligand>
        <name>ATP</name>
        <dbReference type="ChEBI" id="CHEBI:30616"/>
    </ligand>
</feature>
<feature type="sequence conflict" description="In Ref. 2; AAC41446." evidence="2" ref="2">
    <original>M</original>
    <variation>T</variation>
    <location>
        <position position="88"/>
    </location>
</feature>
<feature type="sequence conflict" description="In Ref. 2; AAC41446." evidence="2" ref="2">
    <original>I</original>
    <variation>V</variation>
    <location>
        <position position="119"/>
    </location>
</feature>
<feature type="sequence conflict" description="In Ref. 2; AAC41446." evidence="2" ref="2">
    <original>R</original>
    <variation>W</variation>
    <location>
        <position position="167"/>
    </location>
</feature>
<feature type="sequence conflict" description="In Ref. 2; AAC41446." evidence="2" ref="2">
    <original>H</original>
    <variation>L</variation>
    <location>
        <position position="241"/>
    </location>
</feature>
<feature type="sequence conflict" description="In Ref. 2; AAC41446." evidence="2" ref="2">
    <original>R</original>
    <variation>G</variation>
    <location>
        <position position="250"/>
    </location>
</feature>
<feature type="sequence conflict" description="In Ref. 2; AAC41446." evidence="2" ref="2">
    <original>A</original>
    <variation>T</variation>
    <location>
        <position position="494"/>
    </location>
</feature>
<feature type="sequence conflict" description="In Ref. 2; AAC41446." evidence="2" ref="2">
    <original>G</original>
    <variation>S</variation>
    <location>
        <position position="501"/>
    </location>
</feature>
<keyword id="KW-0030">Aminoacyl-tRNA synthetase</keyword>
<keyword id="KW-0067">ATP-binding</keyword>
<keyword id="KW-0963">Cytoplasm</keyword>
<keyword id="KW-0436">Ligase</keyword>
<keyword id="KW-0479">Metal-binding</keyword>
<keyword id="KW-0547">Nucleotide-binding</keyword>
<keyword id="KW-0648">Protein biosynthesis</keyword>
<keyword id="KW-1185">Reference proteome</keyword>
<keyword id="KW-0862">Zinc</keyword>
<gene>
    <name evidence="1" type="primary">ileS</name>
    <name type="ordered locus">PF1096</name>
</gene>
<sequence>MIKEPEFRDYTPGKLEEKIEQFWKESNIYQKVKELRKNGPKYYFLDGPPYVSGAIHLGTAWNKIIKDMIIRFRTMQGYNVWRQPGYDMHGLPIEVKVEQALGLKTKKEIEEKIGVENFIQKCKEFALNNLRIMTEQFKMLGVWMDWDNPYMTIKNEYIESAWFTLKRAWEKGLLEKDKRVLHWCPRCETALAEHEVRGEYKLRKDPSIYVKFPVEGKENEYLLIWTTTPWTLPANLAVSAHPDYDYVKVRVDLNGREEYWILAKALVEKVLGDIGVKGEVVEEFKGKELEGLRYVHILMDEYPRQKEFREKYEWVHRVILADFVTLEEGTGLVHTAPGHGEEDFEVGQKYGLPVYSPVDDQGKYVEGKWKGVYVKEADPQIIEHLKEKGYLVKAGEIEHKYPHCWRCKTPLIFRATDQWFLKVSKVKEKIIKENDEKVTWYPEWVKIRFDNGVRDSGDWVISRQRYWGIPLPIWQSEDGEIYVVGSWKELVELAVAIEVNGERIDLPESYEEKLKVIEEKLGPEDLHRPYVDAFIIKVNGKEMRRVKDVVDVWFDSGIASWASLGYPRNKELFEKLWPADFIVEGEDQVTKWFYSQQAASVIAFDTVPYRAVAMHGYVLDEKGDKMSKSLGNIIRPEEVVEKAGRDTFRFYMLWATNPWENLKFSWKGVEQVRRMLNILWNVYVLSATYMSLDNFDPRNVKVEELEFREEDKWILSRVNNLIKEVENGIETFYLTKATRALYNFVVEDLSRWYVRLIRKRLWVEGDDPDKLAAYYTLWKVFDVLLRLMAPFTPYITEEIYQNIMRPFTGIESVHMLDWPKPDESAVDEELEREMEFIRRIVEAGSAARQKAKIKLRYPVRKIIIETQDDTVKKAVERLNYILRDQLNAKEVVVGNVEREITVKPNFAKVGPEFKGDARLVAKWISEHGLELYEKGEVDVEIEGKKFHLTREHIIVEENIPDFLVAEDFEGGRVYVDKTLTRELLAEGLAREFVRRIQEMRKRLDLDVNDRIVVTIETTEENRELLQENLEYIMRETRAIEVRFEEAKGYVVEWPEVQAKIGIEKIE</sequence>
<name>SYI_PYRFU</name>
<comment type="function">
    <text evidence="1">Catalyzes the attachment of isoleucine to tRNA(Ile). As IleRS can inadvertently accommodate and process structurally similar amino acids such as valine, to avoid such errors it has two additional distinct tRNA(Ile)-dependent editing activities. One activity is designated as 'pretransfer' editing and involves the hydrolysis of activated Val-AMP. The other activity is designated 'posttransfer' editing and involves deacylation of mischarged Val-tRNA(Ile).</text>
</comment>
<comment type="catalytic activity">
    <reaction evidence="1">
        <text>tRNA(Ile) + L-isoleucine + ATP = L-isoleucyl-tRNA(Ile) + AMP + diphosphate</text>
        <dbReference type="Rhea" id="RHEA:11060"/>
        <dbReference type="Rhea" id="RHEA-COMP:9666"/>
        <dbReference type="Rhea" id="RHEA-COMP:9695"/>
        <dbReference type="ChEBI" id="CHEBI:30616"/>
        <dbReference type="ChEBI" id="CHEBI:33019"/>
        <dbReference type="ChEBI" id="CHEBI:58045"/>
        <dbReference type="ChEBI" id="CHEBI:78442"/>
        <dbReference type="ChEBI" id="CHEBI:78528"/>
        <dbReference type="ChEBI" id="CHEBI:456215"/>
        <dbReference type="EC" id="6.1.1.5"/>
    </reaction>
</comment>
<comment type="cofactor">
    <cofactor evidence="1">
        <name>Zn(2+)</name>
        <dbReference type="ChEBI" id="CHEBI:29105"/>
    </cofactor>
</comment>
<comment type="subunit">
    <text evidence="1">Monomer.</text>
</comment>
<comment type="subcellular location">
    <subcellularLocation>
        <location evidence="1">Cytoplasm</location>
    </subcellularLocation>
</comment>
<comment type="domain">
    <text evidence="1">IleRS has two distinct active sites: one for aminoacylation and one for editing. The misactivated valine is translocated from the active site to the editing site, which sterically excludes the correctly activated isoleucine. The single editing site contains two valyl binding pockets, one specific for each substrate (Val-AMP or Val-tRNA(Ile)).</text>
</comment>
<comment type="similarity">
    <text evidence="1">Belongs to the class-I aminoacyl-tRNA synthetase family. IleS type 2 subfamily.</text>
</comment>
<accession>P46214</accession>
<dbReference type="EC" id="6.1.1.5" evidence="1"/>
<dbReference type="EMBL" id="AE009950">
    <property type="protein sequence ID" value="AAL81220.1"/>
    <property type="molecule type" value="Genomic_DNA"/>
</dbReference>
<dbReference type="EMBL" id="L37105">
    <property type="protein sequence ID" value="AAC41446.1"/>
    <property type="molecule type" value="Genomic_DNA"/>
</dbReference>
<dbReference type="RefSeq" id="WP_011012235.1">
    <property type="nucleotide sequence ID" value="NZ_CP023154.1"/>
</dbReference>
<dbReference type="SMR" id="P46214"/>
<dbReference type="STRING" id="186497.PF1096"/>
<dbReference type="PaxDb" id="186497-PF1096"/>
<dbReference type="GeneID" id="41712904"/>
<dbReference type="KEGG" id="pfu:PF1096"/>
<dbReference type="PATRIC" id="fig|186497.12.peg.1156"/>
<dbReference type="eggNOG" id="arCOG00807">
    <property type="taxonomic scope" value="Archaea"/>
</dbReference>
<dbReference type="HOGENOM" id="CLU_001493_1_1_2"/>
<dbReference type="OrthoDB" id="30823at2157"/>
<dbReference type="PhylomeDB" id="P46214"/>
<dbReference type="Proteomes" id="UP000001013">
    <property type="component" value="Chromosome"/>
</dbReference>
<dbReference type="GO" id="GO:0005737">
    <property type="term" value="C:cytoplasm"/>
    <property type="evidence" value="ECO:0007669"/>
    <property type="project" value="UniProtKB-SubCell"/>
</dbReference>
<dbReference type="GO" id="GO:0002161">
    <property type="term" value="F:aminoacyl-tRNA deacylase activity"/>
    <property type="evidence" value="ECO:0007669"/>
    <property type="project" value="InterPro"/>
</dbReference>
<dbReference type="GO" id="GO:0005524">
    <property type="term" value="F:ATP binding"/>
    <property type="evidence" value="ECO:0007669"/>
    <property type="project" value="UniProtKB-UniRule"/>
</dbReference>
<dbReference type="GO" id="GO:0004822">
    <property type="term" value="F:isoleucine-tRNA ligase activity"/>
    <property type="evidence" value="ECO:0007669"/>
    <property type="project" value="UniProtKB-UniRule"/>
</dbReference>
<dbReference type="GO" id="GO:0000049">
    <property type="term" value="F:tRNA binding"/>
    <property type="evidence" value="ECO:0007669"/>
    <property type="project" value="InterPro"/>
</dbReference>
<dbReference type="GO" id="GO:0008270">
    <property type="term" value="F:zinc ion binding"/>
    <property type="evidence" value="ECO:0007669"/>
    <property type="project" value="UniProtKB-UniRule"/>
</dbReference>
<dbReference type="GO" id="GO:0006428">
    <property type="term" value="P:isoleucyl-tRNA aminoacylation"/>
    <property type="evidence" value="ECO:0007669"/>
    <property type="project" value="UniProtKB-UniRule"/>
</dbReference>
<dbReference type="CDD" id="cd07961">
    <property type="entry name" value="Anticodon_Ia_Ile_ABEc"/>
    <property type="match status" value="1"/>
</dbReference>
<dbReference type="CDD" id="cd00818">
    <property type="entry name" value="IleRS_core"/>
    <property type="match status" value="1"/>
</dbReference>
<dbReference type="FunFam" id="3.40.50.620:FF:000325">
    <property type="entry name" value="Isoleucine--tRNA ligase"/>
    <property type="match status" value="1"/>
</dbReference>
<dbReference type="FunFam" id="3.40.50.620:FF:000421">
    <property type="entry name" value="Isoleucine--tRNA ligase"/>
    <property type="match status" value="1"/>
</dbReference>
<dbReference type="FunFam" id="1.10.730.10:FF:000033">
    <property type="entry name" value="Valine--tRNA ligase"/>
    <property type="match status" value="1"/>
</dbReference>
<dbReference type="Gene3D" id="3.30.720.200">
    <property type="match status" value="1"/>
</dbReference>
<dbReference type="Gene3D" id="3.40.50.620">
    <property type="entry name" value="HUPs"/>
    <property type="match status" value="2"/>
</dbReference>
<dbReference type="Gene3D" id="1.10.730.10">
    <property type="entry name" value="Isoleucyl-tRNA Synthetase, Domain 1"/>
    <property type="match status" value="1"/>
</dbReference>
<dbReference type="Gene3D" id="3.90.740.10">
    <property type="entry name" value="Valyl/Leucyl/Isoleucyl-tRNA synthetase, editing domain"/>
    <property type="match status" value="1"/>
</dbReference>
<dbReference type="HAMAP" id="MF_02003">
    <property type="entry name" value="Ile_tRNA_synth_type2"/>
    <property type="match status" value="1"/>
</dbReference>
<dbReference type="InterPro" id="IPR001412">
    <property type="entry name" value="aa-tRNA-synth_I_CS"/>
</dbReference>
<dbReference type="InterPro" id="IPR002300">
    <property type="entry name" value="aa-tRNA-synth_Ia"/>
</dbReference>
<dbReference type="InterPro" id="IPR033709">
    <property type="entry name" value="Anticodon_Ile_ABEc"/>
</dbReference>
<dbReference type="InterPro" id="IPR002301">
    <property type="entry name" value="Ile-tRNA-ligase"/>
</dbReference>
<dbReference type="InterPro" id="IPR023586">
    <property type="entry name" value="Ile-tRNA-ligase_type2"/>
</dbReference>
<dbReference type="InterPro" id="IPR013155">
    <property type="entry name" value="M/V/L/I-tRNA-synth_anticd-bd"/>
</dbReference>
<dbReference type="InterPro" id="IPR014729">
    <property type="entry name" value="Rossmann-like_a/b/a_fold"/>
</dbReference>
<dbReference type="InterPro" id="IPR009080">
    <property type="entry name" value="tRNAsynth_Ia_anticodon-bd"/>
</dbReference>
<dbReference type="InterPro" id="IPR009008">
    <property type="entry name" value="Val/Leu/Ile-tRNA-synth_edit"/>
</dbReference>
<dbReference type="NCBIfam" id="TIGR00392">
    <property type="entry name" value="ileS"/>
    <property type="match status" value="1"/>
</dbReference>
<dbReference type="PANTHER" id="PTHR42780:SF1">
    <property type="entry name" value="ISOLEUCINE--TRNA LIGASE, CYTOPLASMIC"/>
    <property type="match status" value="1"/>
</dbReference>
<dbReference type="PANTHER" id="PTHR42780">
    <property type="entry name" value="SOLEUCYL-TRNA SYNTHETASE"/>
    <property type="match status" value="1"/>
</dbReference>
<dbReference type="Pfam" id="PF08264">
    <property type="entry name" value="Anticodon_1"/>
    <property type="match status" value="1"/>
</dbReference>
<dbReference type="Pfam" id="PF19302">
    <property type="entry name" value="DUF5915"/>
    <property type="match status" value="1"/>
</dbReference>
<dbReference type="Pfam" id="PF00133">
    <property type="entry name" value="tRNA-synt_1"/>
    <property type="match status" value="1"/>
</dbReference>
<dbReference type="PRINTS" id="PR00984">
    <property type="entry name" value="TRNASYNTHILE"/>
</dbReference>
<dbReference type="SUPFAM" id="SSF47323">
    <property type="entry name" value="Anticodon-binding domain of a subclass of class I aminoacyl-tRNA synthetases"/>
    <property type="match status" value="2"/>
</dbReference>
<dbReference type="SUPFAM" id="SSF52374">
    <property type="entry name" value="Nucleotidylyl transferase"/>
    <property type="match status" value="1"/>
</dbReference>
<dbReference type="SUPFAM" id="SSF50677">
    <property type="entry name" value="ValRS/IleRS/LeuRS editing domain"/>
    <property type="match status" value="1"/>
</dbReference>
<dbReference type="PROSITE" id="PS00178">
    <property type="entry name" value="AA_TRNA_LIGASE_I"/>
    <property type="match status" value="1"/>
</dbReference>
<reference key="1">
    <citation type="journal article" date="1999" name="Genetics">
        <title>Divergence of the hyperthermophilic archaea Pyrococcus furiosus and P. horikoshii inferred from complete genomic sequences.</title>
        <authorList>
            <person name="Maeder D.L."/>
            <person name="Weiss R.B."/>
            <person name="Dunn D.M."/>
            <person name="Cherry J.L."/>
            <person name="Gonzalez J.M."/>
            <person name="DiRuggiero J."/>
            <person name="Robb F.T."/>
        </authorList>
    </citation>
    <scope>NUCLEOTIDE SEQUENCE [LARGE SCALE GENOMIC DNA]</scope>
    <source>
        <strain>ATCC 43587 / DSM 3638 / JCM 8422 / Vc1</strain>
    </source>
</reference>
<reference key="2">
    <citation type="journal article" date="1995" name="Proc. Natl. Acad. Sci. U.S.A.">
        <title>Root of the universal tree of life based on ancient aminoacyl-tRNA synthetase gene duplications.</title>
        <authorList>
            <person name="Brown J.R."/>
            <person name="Doolittle W.F."/>
        </authorList>
    </citation>
    <scope>NUCLEOTIDE SEQUENCE [GENOMIC DNA] OF 87-632</scope>
</reference>
<protein>
    <recommendedName>
        <fullName evidence="1">Isoleucine--tRNA ligase</fullName>
        <ecNumber evidence="1">6.1.1.5</ecNumber>
    </recommendedName>
    <alternativeName>
        <fullName evidence="1">Isoleucyl-tRNA synthetase</fullName>
        <shortName evidence="1">IleRS</shortName>
    </alternativeName>
</protein>